<comment type="function">
    <text evidence="1">Involved in DNA repair and RecF pathway recombination.</text>
</comment>
<comment type="subunit">
    <text evidence="1">Monomer.</text>
</comment>
<comment type="similarity">
    <text evidence="1">Belongs to the RecO family.</text>
</comment>
<organism>
    <name type="scientific">Salmonella agona (strain SL483)</name>
    <dbReference type="NCBI Taxonomy" id="454166"/>
    <lineage>
        <taxon>Bacteria</taxon>
        <taxon>Pseudomonadati</taxon>
        <taxon>Pseudomonadota</taxon>
        <taxon>Gammaproteobacteria</taxon>
        <taxon>Enterobacterales</taxon>
        <taxon>Enterobacteriaceae</taxon>
        <taxon>Salmonella</taxon>
    </lineage>
</organism>
<sequence>MEGWQRAFVLHSRPWSETSLMLDVFTEESGRVRLVAKGARSKRSNLKGALQPFTPLLLRYSGRGEVKTLRSAEAVSLALPLSGITLYSGLYINELLSRVLEYETRFSELFFDYLNCIQALAGTTGSPEPALRRFELALLGHLGYGVNFTHCAGSGERVDDTMTYRYREEKGFFASVVIDNNTFTGRHLKALEAREFPDVDTLRAAKRFTRMALKPYLGGKPLKSRELFRQFMPKRTVKTKKD</sequence>
<reference key="1">
    <citation type="journal article" date="2011" name="J. Bacteriol.">
        <title>Comparative genomics of 28 Salmonella enterica isolates: evidence for CRISPR-mediated adaptive sublineage evolution.</title>
        <authorList>
            <person name="Fricke W.F."/>
            <person name="Mammel M.K."/>
            <person name="McDermott P.F."/>
            <person name="Tartera C."/>
            <person name="White D.G."/>
            <person name="Leclerc J.E."/>
            <person name="Ravel J."/>
            <person name="Cebula T.A."/>
        </authorList>
    </citation>
    <scope>NUCLEOTIDE SEQUENCE [LARGE SCALE GENOMIC DNA]</scope>
    <source>
        <strain>SL483</strain>
    </source>
</reference>
<keyword id="KW-0227">DNA damage</keyword>
<keyword id="KW-0233">DNA recombination</keyword>
<keyword id="KW-0234">DNA repair</keyword>
<evidence type="ECO:0000255" key="1">
    <source>
        <dbReference type="HAMAP-Rule" id="MF_00201"/>
    </source>
</evidence>
<protein>
    <recommendedName>
        <fullName evidence="1">DNA repair protein RecO</fullName>
    </recommendedName>
    <alternativeName>
        <fullName evidence="1">Recombination protein O</fullName>
    </alternativeName>
</protein>
<proteinExistence type="inferred from homology"/>
<accession>B5F1F9</accession>
<feature type="chain" id="PRO_1000099404" description="DNA repair protein RecO">
    <location>
        <begin position="1"/>
        <end position="242"/>
    </location>
</feature>
<gene>
    <name evidence="1" type="primary">recO</name>
    <name type="ordered locus">SeAg_B2741</name>
</gene>
<dbReference type="EMBL" id="CP001138">
    <property type="protein sequence ID" value="ACH49954.1"/>
    <property type="molecule type" value="Genomic_DNA"/>
</dbReference>
<dbReference type="RefSeq" id="WP_000399380.1">
    <property type="nucleotide sequence ID" value="NC_011149.1"/>
</dbReference>
<dbReference type="SMR" id="B5F1F9"/>
<dbReference type="KEGG" id="sea:SeAg_B2741"/>
<dbReference type="HOGENOM" id="CLU_066645_1_0_6"/>
<dbReference type="Proteomes" id="UP000008819">
    <property type="component" value="Chromosome"/>
</dbReference>
<dbReference type="GO" id="GO:0043590">
    <property type="term" value="C:bacterial nucleoid"/>
    <property type="evidence" value="ECO:0007669"/>
    <property type="project" value="TreeGrafter"/>
</dbReference>
<dbReference type="GO" id="GO:0006310">
    <property type="term" value="P:DNA recombination"/>
    <property type="evidence" value="ECO:0007669"/>
    <property type="project" value="UniProtKB-UniRule"/>
</dbReference>
<dbReference type="GO" id="GO:0006302">
    <property type="term" value="P:double-strand break repair"/>
    <property type="evidence" value="ECO:0007669"/>
    <property type="project" value="TreeGrafter"/>
</dbReference>
<dbReference type="FunFam" id="1.20.1440.120:FF:000001">
    <property type="entry name" value="DNA repair protein RecO"/>
    <property type="match status" value="1"/>
</dbReference>
<dbReference type="FunFam" id="2.40.50.140:FF:000074">
    <property type="entry name" value="DNA repair protein RecO"/>
    <property type="match status" value="1"/>
</dbReference>
<dbReference type="Gene3D" id="2.40.50.140">
    <property type="entry name" value="Nucleic acid-binding proteins"/>
    <property type="match status" value="1"/>
</dbReference>
<dbReference type="Gene3D" id="1.20.1440.120">
    <property type="entry name" value="Recombination protein O, C-terminal domain"/>
    <property type="match status" value="1"/>
</dbReference>
<dbReference type="HAMAP" id="MF_00201">
    <property type="entry name" value="RecO"/>
    <property type="match status" value="1"/>
</dbReference>
<dbReference type="InterPro" id="IPR037278">
    <property type="entry name" value="ARFGAP/RecO"/>
</dbReference>
<dbReference type="InterPro" id="IPR022572">
    <property type="entry name" value="DNA_rep/recomb_RecO_N"/>
</dbReference>
<dbReference type="InterPro" id="IPR012340">
    <property type="entry name" value="NA-bd_OB-fold"/>
</dbReference>
<dbReference type="InterPro" id="IPR003717">
    <property type="entry name" value="RecO"/>
</dbReference>
<dbReference type="InterPro" id="IPR042242">
    <property type="entry name" value="RecO_C"/>
</dbReference>
<dbReference type="NCBIfam" id="TIGR00613">
    <property type="entry name" value="reco"/>
    <property type="match status" value="1"/>
</dbReference>
<dbReference type="PANTHER" id="PTHR33991">
    <property type="entry name" value="DNA REPAIR PROTEIN RECO"/>
    <property type="match status" value="1"/>
</dbReference>
<dbReference type="PANTHER" id="PTHR33991:SF1">
    <property type="entry name" value="DNA REPAIR PROTEIN RECO"/>
    <property type="match status" value="1"/>
</dbReference>
<dbReference type="Pfam" id="PF02565">
    <property type="entry name" value="RecO_C"/>
    <property type="match status" value="1"/>
</dbReference>
<dbReference type="Pfam" id="PF11967">
    <property type="entry name" value="RecO_N"/>
    <property type="match status" value="1"/>
</dbReference>
<dbReference type="SUPFAM" id="SSF57863">
    <property type="entry name" value="ArfGap/RecO-like zinc finger"/>
    <property type="match status" value="1"/>
</dbReference>
<dbReference type="SUPFAM" id="SSF50249">
    <property type="entry name" value="Nucleic acid-binding proteins"/>
    <property type="match status" value="1"/>
</dbReference>
<name>RECO_SALA4</name>